<dbReference type="EC" id="4.2.1.6" evidence="2"/>
<dbReference type="EMBL" id="AE017220">
    <property type="protein sequence ID" value="AAX67651.1"/>
    <property type="molecule type" value="Genomic_DNA"/>
</dbReference>
<dbReference type="RefSeq" id="WP_001541161.1">
    <property type="nucleotide sequence ID" value="NC_006905.1"/>
</dbReference>
<dbReference type="SMR" id="Q57I11"/>
<dbReference type="KEGG" id="sec:SCH_3745"/>
<dbReference type="HOGENOM" id="CLU_030273_3_2_6"/>
<dbReference type="UniPathway" id="UPA00081">
    <property type="reaction ID" value="UER00518"/>
</dbReference>
<dbReference type="Proteomes" id="UP000000538">
    <property type="component" value="Chromosome"/>
</dbReference>
<dbReference type="GO" id="GO:0008869">
    <property type="term" value="F:galactonate dehydratase activity"/>
    <property type="evidence" value="ECO:0007669"/>
    <property type="project" value="UniProtKB-UniRule"/>
</dbReference>
<dbReference type="GO" id="GO:0000287">
    <property type="term" value="F:magnesium ion binding"/>
    <property type="evidence" value="ECO:0007669"/>
    <property type="project" value="UniProtKB-UniRule"/>
</dbReference>
<dbReference type="GO" id="GO:0009063">
    <property type="term" value="P:amino acid catabolic process"/>
    <property type="evidence" value="ECO:0007669"/>
    <property type="project" value="InterPro"/>
</dbReference>
<dbReference type="GO" id="GO:0034194">
    <property type="term" value="P:D-galactonate catabolic process"/>
    <property type="evidence" value="ECO:0007669"/>
    <property type="project" value="UniProtKB-UniRule"/>
</dbReference>
<dbReference type="CDD" id="cd03325">
    <property type="entry name" value="D-galactonate_dehydratase"/>
    <property type="match status" value="1"/>
</dbReference>
<dbReference type="FunFam" id="3.20.20.120:FF:000008">
    <property type="entry name" value="D-galactonate dehydratase"/>
    <property type="match status" value="1"/>
</dbReference>
<dbReference type="FunFam" id="3.30.390.10:FF:000003">
    <property type="entry name" value="D-galactonate dehydratase"/>
    <property type="match status" value="1"/>
</dbReference>
<dbReference type="Gene3D" id="3.20.20.120">
    <property type="entry name" value="Enolase-like C-terminal domain"/>
    <property type="match status" value="1"/>
</dbReference>
<dbReference type="Gene3D" id="3.30.390.10">
    <property type="entry name" value="Enolase-like, N-terminal domain"/>
    <property type="match status" value="1"/>
</dbReference>
<dbReference type="HAMAP" id="MF_01289">
    <property type="entry name" value="Galacton_dehydrat"/>
    <property type="match status" value="1"/>
</dbReference>
<dbReference type="InterPro" id="IPR034593">
    <property type="entry name" value="DgoD-like"/>
</dbReference>
<dbReference type="InterPro" id="IPR036849">
    <property type="entry name" value="Enolase-like_C_sf"/>
</dbReference>
<dbReference type="InterPro" id="IPR029017">
    <property type="entry name" value="Enolase-like_N"/>
</dbReference>
<dbReference type="InterPro" id="IPR029065">
    <property type="entry name" value="Enolase_C-like"/>
</dbReference>
<dbReference type="InterPro" id="IPR023592">
    <property type="entry name" value="Galactonate_deHydtase"/>
</dbReference>
<dbReference type="InterPro" id="IPR018110">
    <property type="entry name" value="Mandel_Rmase/mucon_lact_enz_CS"/>
</dbReference>
<dbReference type="InterPro" id="IPR013342">
    <property type="entry name" value="Mandelate_racemase_C"/>
</dbReference>
<dbReference type="InterPro" id="IPR013341">
    <property type="entry name" value="Mandelate_racemase_N_dom"/>
</dbReference>
<dbReference type="NCBIfam" id="NF010624">
    <property type="entry name" value="PRK14017.1"/>
    <property type="match status" value="1"/>
</dbReference>
<dbReference type="PANTHER" id="PTHR48080:SF2">
    <property type="entry name" value="D-GALACTONATE DEHYDRATASE"/>
    <property type="match status" value="1"/>
</dbReference>
<dbReference type="PANTHER" id="PTHR48080">
    <property type="entry name" value="D-GALACTONATE DEHYDRATASE-RELATED"/>
    <property type="match status" value="1"/>
</dbReference>
<dbReference type="Pfam" id="PF13378">
    <property type="entry name" value="MR_MLE_C"/>
    <property type="match status" value="1"/>
</dbReference>
<dbReference type="Pfam" id="PF02746">
    <property type="entry name" value="MR_MLE_N"/>
    <property type="match status" value="1"/>
</dbReference>
<dbReference type="SFLD" id="SFLDF00003">
    <property type="entry name" value="D-galactonate_dehydratase"/>
    <property type="match status" value="1"/>
</dbReference>
<dbReference type="SFLD" id="SFLDS00001">
    <property type="entry name" value="Enolase"/>
    <property type="match status" value="1"/>
</dbReference>
<dbReference type="SMART" id="SM00922">
    <property type="entry name" value="MR_MLE"/>
    <property type="match status" value="1"/>
</dbReference>
<dbReference type="SUPFAM" id="SSF51604">
    <property type="entry name" value="Enolase C-terminal domain-like"/>
    <property type="match status" value="1"/>
</dbReference>
<dbReference type="SUPFAM" id="SSF54826">
    <property type="entry name" value="Enolase N-terminal domain-like"/>
    <property type="match status" value="1"/>
</dbReference>
<dbReference type="PROSITE" id="PS00908">
    <property type="entry name" value="MR_MLE_1"/>
    <property type="match status" value="1"/>
</dbReference>
<dbReference type="PROSITE" id="PS00909">
    <property type="entry name" value="MR_MLE_2"/>
    <property type="match status" value="1"/>
</dbReference>
<keyword id="KW-0456">Lyase</keyword>
<keyword id="KW-0460">Magnesium</keyword>
<keyword id="KW-0479">Metal-binding</keyword>
<sequence length="382" mass="42409">MKITHITTYRLPPRWMFLKIETDEGVVGWGEPVIESRARTVEAAVHEFADYLIGKDPARINDLWQVMYRAGFYRGGPIMMSAIAGIDQALWDIKGKVLNAPVWQLMGGLVRDKIKAYSWVGGDRPADVIDGIEKLRGIGFDTFKLNGCEEMGVIDNSRAVDAAVNTVAQIREAFGSEIEFGLDFHGRVSAPMAKVLIKELEPYRPLFIEEPVLAEQAEYYPRLAAQTHIPIAAGERMFSRFEFKRVLDAGGLAILQPDLSHAGGITECYKIAGMAEAYDVALAPHCPLGPIALAACLHIDFVSRNAVFQEQSMGIHYNKGAELLDFVKNKEDFSMDGGFFKPLTKPGLGVDIDEARVIELSKSAPDWRNPLWRHADGSVAEW</sequence>
<evidence type="ECO:0000250" key="1"/>
<evidence type="ECO:0000255" key="2">
    <source>
        <dbReference type="HAMAP-Rule" id="MF_01289"/>
    </source>
</evidence>
<feature type="chain" id="PRO_0000352633" description="D-galactonate dehydratase">
    <location>
        <begin position="1"/>
        <end position="382"/>
    </location>
</feature>
<feature type="active site" description="Proton donor" evidence="1">
    <location>
        <position position="185"/>
    </location>
</feature>
<feature type="active site" description="Proton acceptor" evidence="1">
    <location>
        <position position="285"/>
    </location>
</feature>
<feature type="binding site" evidence="2">
    <location>
        <position position="183"/>
    </location>
    <ligand>
        <name>Mg(2+)</name>
        <dbReference type="ChEBI" id="CHEBI:18420"/>
    </ligand>
</feature>
<feature type="binding site" evidence="2">
    <location>
        <position position="209"/>
    </location>
    <ligand>
        <name>Mg(2+)</name>
        <dbReference type="ChEBI" id="CHEBI:18420"/>
    </ligand>
</feature>
<feature type="binding site" evidence="2">
    <location>
        <position position="235"/>
    </location>
    <ligand>
        <name>Mg(2+)</name>
        <dbReference type="ChEBI" id="CHEBI:18420"/>
    </ligand>
</feature>
<feature type="site" description="Increases basicity of active site His" evidence="2">
    <location>
        <position position="258"/>
    </location>
</feature>
<feature type="site" description="Transition state stabilizer" evidence="2">
    <location>
        <position position="310"/>
    </location>
</feature>
<comment type="function">
    <text evidence="2">Catalyzes the dehydration of D-galactonate to 2-keto-3-deoxy-D-galactonate.</text>
</comment>
<comment type="catalytic activity">
    <reaction evidence="2">
        <text>D-galactonate = 2-dehydro-3-deoxy-D-galactonate + H2O</text>
        <dbReference type="Rhea" id="RHEA:18649"/>
        <dbReference type="ChEBI" id="CHEBI:12931"/>
        <dbReference type="ChEBI" id="CHEBI:15377"/>
        <dbReference type="ChEBI" id="CHEBI:57989"/>
        <dbReference type="EC" id="4.2.1.6"/>
    </reaction>
</comment>
<comment type="cofactor">
    <cofactor evidence="2">
        <name>Mg(2+)</name>
        <dbReference type="ChEBI" id="CHEBI:18420"/>
    </cofactor>
    <text evidence="2">Binds 1 Mg(2+) ion per subunit.</text>
</comment>
<comment type="pathway">
    <text evidence="2">Carbohydrate acid metabolism; D-galactonate degradation; D-glyceraldehyde 3-phosphate and pyruvate from D-galactonate: step 1/3.</text>
</comment>
<comment type="miscellaneous">
    <text evidence="2">Reaction proceeds via an anti dehydration.</text>
</comment>
<comment type="similarity">
    <text evidence="2">Belongs to the mandelate racemase/muconate lactonizing enzyme family. GalD subfamily.</text>
</comment>
<gene>
    <name evidence="2" type="primary">dgoD</name>
    <name type="ordered locus">SCH_3745</name>
</gene>
<accession>Q57I11</accession>
<protein>
    <recommendedName>
        <fullName evidence="2">D-galactonate dehydratase</fullName>
        <shortName evidence="2">GalD</shortName>
        <ecNumber evidence="2">4.2.1.6</ecNumber>
    </recommendedName>
</protein>
<reference key="1">
    <citation type="journal article" date="2005" name="Nucleic Acids Res.">
        <title>The genome sequence of Salmonella enterica serovar Choleraesuis, a highly invasive and resistant zoonotic pathogen.</title>
        <authorList>
            <person name="Chiu C.-H."/>
            <person name="Tang P."/>
            <person name="Chu C."/>
            <person name="Hu S."/>
            <person name="Bao Q."/>
            <person name="Yu J."/>
            <person name="Chou Y.-Y."/>
            <person name="Wang H.-S."/>
            <person name="Lee Y.-S."/>
        </authorList>
    </citation>
    <scope>NUCLEOTIDE SEQUENCE [LARGE SCALE GENOMIC DNA]</scope>
    <source>
        <strain>SC-B67</strain>
    </source>
</reference>
<proteinExistence type="inferred from homology"/>
<organism>
    <name type="scientific">Salmonella choleraesuis (strain SC-B67)</name>
    <dbReference type="NCBI Taxonomy" id="321314"/>
    <lineage>
        <taxon>Bacteria</taxon>
        <taxon>Pseudomonadati</taxon>
        <taxon>Pseudomonadota</taxon>
        <taxon>Gammaproteobacteria</taxon>
        <taxon>Enterobacterales</taxon>
        <taxon>Enterobacteriaceae</taxon>
        <taxon>Salmonella</taxon>
    </lineage>
</organism>
<name>DGOD_SALCH</name>